<proteinExistence type="evidence at transcript level"/>
<name>ACEA_GOSHI</name>
<reference key="1">
    <citation type="journal article" date="1990" name="Biochim. Biophys. Acta">
        <title>Characterization of a cDNA clone encoding the complete amino acid sequence of cotton isocitrate lyase.</title>
        <authorList>
            <person name="Turley R.B."/>
            <person name="Choe S.M."/>
            <person name="Trelease R.N."/>
        </authorList>
    </citation>
    <scope>NUCLEOTIDE SEQUENCE [MRNA]</scope>
    <source>
        <strain>cv. Deltapine 62</strain>
        <tissue>Cotyledon</tissue>
    </source>
</reference>
<keyword id="KW-0329">Glyoxylate bypass</keyword>
<keyword id="KW-0330">Glyoxysome</keyword>
<keyword id="KW-0456">Lyase</keyword>
<keyword id="KW-0460">Magnesium</keyword>
<keyword id="KW-0479">Metal-binding</keyword>
<keyword id="KW-0576">Peroxisome</keyword>
<keyword id="KW-1185">Reference proteome</keyword>
<keyword id="KW-0816">Tricarboxylic acid cycle</keyword>
<sequence>MAASFSVPSMIMEEEGRFETEVAEVQAWWNSERFKLTRRPYSARDVVALRGSLKQSYGSNEMAKKLWTTLKTHQANGTASRTFGALDPVQVTMMAKHLDSIYVSGWQCSSTHTTTNEPGPDLADYPYDTVPNKVEHLFFAQQYHDRKQREARMSMSREERARTPYVDYLKPIIADGDTGFGGTTATVKLCKLFVERGAAGVHIEDQSSVTKKCGHMAGKVLVAVSEHINRLVAARLQFDVMGVETVLVARTDAVAATLIQTNVDTRDHQFILGATNPNLRGKSLANMLAEGMAAGKNGPQLQAIEDNWLAIAQLKTFSECVMDAIKSMNITEDEKRRRMNEWMNHSSYDKCLSNEQAREIAERLGLQNLFWDWDLPRTREGFYRFRGSVMAAIVRGWAFAPHADLIWMETSSPDMVECTRFAEGVKSMHPEIMLAYNLSPSFNWDASGMTDEHMRDFIPRIAKLGFCWQFITLAGFHADALVTDTFARDFARRGMLAYVEKIQREERNNGVDTLAHQKWSGANFYDRYLKTVQGGISSTAAMGKGVTEEQFKETWTRPGAGNIGSEGNLVVAKARM</sequence>
<protein>
    <recommendedName>
        <fullName evidence="1">Isocitrate lyase</fullName>
        <shortName evidence="1">ICL</shortName>
        <ecNumber evidence="1">4.1.3.1</ecNumber>
    </recommendedName>
    <alternativeName>
        <fullName evidence="1">Isocitrase</fullName>
    </alternativeName>
    <alternativeName>
        <fullName evidence="1">Isocitratsysase</fullName>
    </alternativeName>
</protein>
<dbReference type="EC" id="4.1.3.1" evidence="1"/>
<dbReference type="EMBL" id="X52136">
    <property type="protein sequence ID" value="CAA36381.1"/>
    <property type="molecule type" value="mRNA"/>
</dbReference>
<dbReference type="PIR" id="S10771">
    <property type="entry name" value="WZCNIU"/>
</dbReference>
<dbReference type="RefSeq" id="NP_001314103.1">
    <property type="nucleotide sequence ID" value="NM_001327174.1"/>
</dbReference>
<dbReference type="SMR" id="P17069"/>
<dbReference type="STRING" id="3635.P17069"/>
<dbReference type="PaxDb" id="3635-P17069"/>
<dbReference type="GeneID" id="107920350"/>
<dbReference type="KEGG" id="ghi:107920350"/>
<dbReference type="OrthoDB" id="33109at41938"/>
<dbReference type="BRENDA" id="4.1.3.1">
    <property type="organism ID" value="2499"/>
</dbReference>
<dbReference type="UniPathway" id="UPA00703">
    <property type="reaction ID" value="UER00719"/>
</dbReference>
<dbReference type="Proteomes" id="UP000189702">
    <property type="component" value="Unplaced"/>
</dbReference>
<dbReference type="GO" id="GO:0009514">
    <property type="term" value="C:glyoxysome"/>
    <property type="evidence" value="ECO:0000318"/>
    <property type="project" value="GO_Central"/>
</dbReference>
<dbReference type="GO" id="GO:0004451">
    <property type="term" value="F:isocitrate lyase activity"/>
    <property type="evidence" value="ECO:0000318"/>
    <property type="project" value="GO_Central"/>
</dbReference>
<dbReference type="GO" id="GO:0046872">
    <property type="term" value="F:metal ion binding"/>
    <property type="evidence" value="ECO:0007669"/>
    <property type="project" value="UniProtKB-KW"/>
</dbReference>
<dbReference type="GO" id="GO:0006097">
    <property type="term" value="P:glyoxylate cycle"/>
    <property type="evidence" value="ECO:0007669"/>
    <property type="project" value="UniProtKB-UniPathway"/>
</dbReference>
<dbReference type="GO" id="GO:0006099">
    <property type="term" value="P:tricarboxylic acid cycle"/>
    <property type="evidence" value="ECO:0007669"/>
    <property type="project" value="UniProtKB-KW"/>
</dbReference>
<dbReference type="CDD" id="cd00377">
    <property type="entry name" value="ICL_PEPM"/>
    <property type="match status" value="1"/>
</dbReference>
<dbReference type="FunFam" id="1.10.10.850:FF:000001">
    <property type="entry name" value="Isocitrate lyase"/>
    <property type="match status" value="1"/>
</dbReference>
<dbReference type="Gene3D" id="1.10.10.850">
    <property type="match status" value="1"/>
</dbReference>
<dbReference type="Gene3D" id="3.20.20.60">
    <property type="entry name" value="Phosphoenolpyruvate-binding domains"/>
    <property type="match status" value="1"/>
</dbReference>
<dbReference type="InterPro" id="IPR039556">
    <property type="entry name" value="ICL/PEPM"/>
</dbReference>
<dbReference type="InterPro" id="IPR006254">
    <property type="entry name" value="Isocitrate_lyase"/>
</dbReference>
<dbReference type="InterPro" id="IPR018523">
    <property type="entry name" value="Isocitrate_lyase_ph_CS"/>
</dbReference>
<dbReference type="InterPro" id="IPR015813">
    <property type="entry name" value="Pyrv/PenolPyrv_kinase-like_dom"/>
</dbReference>
<dbReference type="InterPro" id="IPR040442">
    <property type="entry name" value="Pyrv_kinase-like_dom_sf"/>
</dbReference>
<dbReference type="NCBIfam" id="TIGR01346">
    <property type="entry name" value="isocit_lyase"/>
    <property type="match status" value="1"/>
</dbReference>
<dbReference type="PANTHER" id="PTHR21631:SF3">
    <property type="entry name" value="BIFUNCTIONAL GLYOXYLATE CYCLE PROTEIN"/>
    <property type="match status" value="1"/>
</dbReference>
<dbReference type="PANTHER" id="PTHR21631">
    <property type="entry name" value="ISOCITRATE LYASE/MALATE SYNTHASE"/>
    <property type="match status" value="1"/>
</dbReference>
<dbReference type="Pfam" id="PF00463">
    <property type="entry name" value="ICL"/>
    <property type="match status" value="1"/>
</dbReference>
<dbReference type="PIRSF" id="PIRSF001362">
    <property type="entry name" value="Isocit_lyase"/>
    <property type="match status" value="1"/>
</dbReference>
<dbReference type="SUPFAM" id="SSF51621">
    <property type="entry name" value="Phosphoenolpyruvate/pyruvate domain"/>
    <property type="match status" value="1"/>
</dbReference>
<dbReference type="PROSITE" id="PS00161">
    <property type="entry name" value="ISOCITRATE_LYASE"/>
    <property type="match status" value="1"/>
</dbReference>
<feature type="chain" id="PRO_0000068806" description="Isocitrate lyase">
    <location>
        <begin position="1"/>
        <end position="576"/>
    </location>
</feature>
<feature type="short sequence motif" description="Microbody targeting signal" evidence="3">
    <location>
        <begin position="574"/>
        <end position="576"/>
    </location>
</feature>
<feature type="active site" description="Proton acceptor" evidence="2">
    <location>
        <position position="213"/>
    </location>
</feature>
<feature type="binding site" evidence="2">
    <location>
        <begin position="104"/>
        <end position="106"/>
    </location>
    <ligand>
        <name>substrate</name>
    </ligand>
</feature>
<feature type="binding site" evidence="2">
    <location>
        <position position="175"/>
    </location>
    <ligand>
        <name>Mg(2+)</name>
        <dbReference type="ChEBI" id="CHEBI:18420"/>
    </ligand>
</feature>
<feature type="binding site" evidence="2">
    <location>
        <begin position="214"/>
        <end position="215"/>
    </location>
    <ligand>
        <name>substrate</name>
    </ligand>
</feature>
<feature type="binding site" evidence="2">
    <location>
        <position position="250"/>
    </location>
    <ligand>
        <name>substrate</name>
    </ligand>
</feature>
<feature type="binding site" evidence="2">
    <location>
        <begin position="437"/>
        <end position="441"/>
    </location>
    <ligand>
        <name>substrate</name>
    </ligand>
</feature>
<feature type="binding site" evidence="2">
    <location>
        <position position="472"/>
    </location>
    <ligand>
        <name>substrate</name>
    </ligand>
</feature>
<evidence type="ECO:0000250" key="1">
    <source>
        <dbReference type="UniProtKB" id="P28297"/>
    </source>
</evidence>
<evidence type="ECO:0000250" key="2">
    <source>
        <dbReference type="UniProtKB" id="P9WKK7"/>
    </source>
</evidence>
<evidence type="ECO:0000255" key="3"/>
<evidence type="ECO:0000305" key="4"/>
<accession>P17069</accession>
<organism>
    <name type="scientific">Gossypium hirsutum</name>
    <name type="common">Upland cotton</name>
    <name type="synonym">Gossypium mexicanum</name>
    <dbReference type="NCBI Taxonomy" id="3635"/>
    <lineage>
        <taxon>Eukaryota</taxon>
        <taxon>Viridiplantae</taxon>
        <taxon>Streptophyta</taxon>
        <taxon>Embryophyta</taxon>
        <taxon>Tracheophyta</taxon>
        <taxon>Spermatophyta</taxon>
        <taxon>Magnoliopsida</taxon>
        <taxon>eudicotyledons</taxon>
        <taxon>Gunneridae</taxon>
        <taxon>Pentapetalae</taxon>
        <taxon>rosids</taxon>
        <taxon>malvids</taxon>
        <taxon>Malvales</taxon>
        <taxon>Malvaceae</taxon>
        <taxon>Malvoideae</taxon>
        <taxon>Gossypium</taxon>
    </lineage>
</organism>
<comment type="function">
    <text evidence="1">Involved in storage lipid mobilization during the growth of higher plant seedling.</text>
</comment>
<comment type="catalytic activity">
    <reaction evidence="1">
        <text>D-threo-isocitrate = glyoxylate + succinate</text>
        <dbReference type="Rhea" id="RHEA:13245"/>
        <dbReference type="ChEBI" id="CHEBI:15562"/>
        <dbReference type="ChEBI" id="CHEBI:30031"/>
        <dbReference type="ChEBI" id="CHEBI:36655"/>
        <dbReference type="EC" id="4.1.3.1"/>
    </reaction>
</comment>
<comment type="cofactor">
    <cofactor evidence="2">
        <name>Mg(2+)</name>
        <dbReference type="ChEBI" id="CHEBI:18420"/>
    </cofactor>
</comment>
<comment type="pathway">
    <text evidence="1">Carbohydrate metabolism; glyoxylate cycle; (S)-malate from isocitrate: step 1/2.</text>
</comment>
<comment type="subunit">
    <text evidence="1">Homotetramer.</text>
</comment>
<comment type="subcellular location">
    <subcellularLocation>
        <location evidence="1">Glyoxysome</location>
    </subcellularLocation>
</comment>
<comment type="similarity">
    <text evidence="4">Belongs to the isocitrate lyase/PEP mutase superfamily. Isocitrate lyase family.</text>
</comment>